<feature type="chain" id="PRO_0000086666" description="Carbon catabolite-derepressing protein kinase">
    <location>
        <begin position="1"/>
        <end position="620"/>
    </location>
</feature>
<feature type="domain" description="Protein kinase" evidence="2">
    <location>
        <begin position="53"/>
        <end position="305"/>
    </location>
</feature>
<feature type="region of interest" description="Disordered" evidence="4">
    <location>
        <begin position="1"/>
        <end position="45"/>
    </location>
</feature>
<feature type="region of interest" description="Disordered" evidence="4">
    <location>
        <begin position="399"/>
        <end position="424"/>
    </location>
</feature>
<feature type="region of interest" description="Disordered" evidence="4">
    <location>
        <begin position="466"/>
        <end position="486"/>
    </location>
</feature>
<feature type="compositionally biased region" description="Low complexity" evidence="4">
    <location>
        <begin position="1"/>
        <end position="16"/>
    </location>
</feature>
<feature type="compositionally biased region" description="Basic residues" evidence="4">
    <location>
        <begin position="17"/>
        <end position="29"/>
    </location>
</feature>
<feature type="compositionally biased region" description="Polar residues" evidence="4">
    <location>
        <begin position="466"/>
        <end position="476"/>
    </location>
</feature>
<feature type="active site" description="Proton acceptor" evidence="2 3">
    <location>
        <position position="175"/>
    </location>
</feature>
<feature type="binding site" evidence="2">
    <location>
        <begin position="59"/>
        <end position="67"/>
    </location>
    <ligand>
        <name>ATP</name>
        <dbReference type="ChEBI" id="CHEBI:30616"/>
    </ligand>
</feature>
<feature type="binding site" evidence="2">
    <location>
        <position position="82"/>
    </location>
    <ligand>
        <name>ATP</name>
        <dbReference type="ChEBI" id="CHEBI:30616"/>
    </ligand>
</feature>
<feature type="modified residue" description="Phosphothreonine; by autocatalysis" evidence="1">
    <location>
        <position position="208"/>
    </location>
</feature>
<feature type="sequence conflict" description="In Ref. 2; AAA92456." evidence="5" ref="2">
    <original>PQ</original>
    <variation>AR</variation>
    <location>
        <begin position="7"/>
        <end position="8"/>
    </location>
</feature>
<feature type="sequence conflict" description="In Ref. 2; AAA92456." evidence="5" ref="2">
    <original>AGPEVDV</original>
    <variation>SSVQKLMI</variation>
    <location>
        <begin position="228"/>
        <end position="234"/>
    </location>
</feature>
<feature type="sequence conflict" description="In Ref. 2; AAA92456." evidence="5" ref="2">
    <original>YVMLCGRLPFDDEF</original>
    <variation>GMSCCVVDYHSMTSS</variation>
    <location>
        <begin position="242"/>
        <end position="255"/>
    </location>
</feature>
<feature type="sequence conflict" description="In Ref. 2; AAA92456." evidence="5" ref="2">
    <original>A</original>
    <variation>R</variation>
    <location>
        <position position="387"/>
    </location>
</feature>
<feature type="sequence conflict" description="In Ref. 2; AAA92456." evidence="5" ref="2">
    <original>R</original>
    <variation>A</variation>
    <location>
        <position position="416"/>
    </location>
</feature>
<feature type="sequence conflict" description="In Ref. 2; AAA92456." evidence="5" ref="2">
    <original>S</original>
    <variation>L</variation>
    <location>
        <position position="494"/>
    </location>
</feature>
<gene>
    <name type="primary">SNF1</name>
</gene>
<proteinExistence type="evidence at transcript level"/>
<dbReference type="EC" id="2.7.11.1"/>
<dbReference type="EMBL" id="L78129">
    <property type="protein sequence ID" value="AAB48643.1"/>
    <property type="molecule type" value="Genomic_DNA"/>
</dbReference>
<dbReference type="EMBL" id="L39263">
    <property type="protein sequence ID" value="AAA92456.1"/>
    <property type="molecule type" value="mRNA"/>
</dbReference>
<dbReference type="SMR" id="P52497"/>
<dbReference type="VEuPathDB" id="FungiDB:C5_01320W_A"/>
<dbReference type="VEuPathDB" id="FungiDB:CAWG_04520"/>
<dbReference type="BRENDA" id="2.7.11.1">
    <property type="organism ID" value="1096"/>
</dbReference>
<dbReference type="PHI-base" id="PHI:7073"/>
<dbReference type="GO" id="GO:0000144">
    <property type="term" value="C:cellular bud neck septin ring"/>
    <property type="evidence" value="ECO:0007669"/>
    <property type="project" value="EnsemblFungi"/>
</dbReference>
<dbReference type="GO" id="GO:0005641">
    <property type="term" value="C:nuclear envelope lumen"/>
    <property type="evidence" value="ECO:0007669"/>
    <property type="project" value="EnsemblFungi"/>
</dbReference>
<dbReference type="GO" id="GO:0031965">
    <property type="term" value="C:nuclear membrane"/>
    <property type="evidence" value="ECO:0007669"/>
    <property type="project" value="UniProtKB-SubCell"/>
</dbReference>
<dbReference type="GO" id="GO:0031588">
    <property type="term" value="C:nucleotide-activated protein kinase complex"/>
    <property type="evidence" value="ECO:0007669"/>
    <property type="project" value="EnsemblFungi"/>
</dbReference>
<dbReference type="GO" id="GO:0005774">
    <property type="term" value="C:vacuolar membrane"/>
    <property type="evidence" value="ECO:0007669"/>
    <property type="project" value="EnsemblFungi"/>
</dbReference>
<dbReference type="GO" id="GO:0004679">
    <property type="term" value="F:AMP-activated protein kinase activity"/>
    <property type="evidence" value="ECO:0007669"/>
    <property type="project" value="EnsemblFungi"/>
</dbReference>
<dbReference type="GO" id="GO:0005524">
    <property type="term" value="F:ATP binding"/>
    <property type="evidence" value="ECO:0007669"/>
    <property type="project" value="UniProtKB-KW"/>
</dbReference>
<dbReference type="GO" id="GO:0005085">
    <property type="term" value="F:guanyl-nucleotide exchange factor activity"/>
    <property type="evidence" value="ECO:0007669"/>
    <property type="project" value="EnsemblFungi"/>
</dbReference>
<dbReference type="GO" id="GO:0042802">
    <property type="term" value="F:identical protein binding"/>
    <property type="evidence" value="ECO:0007669"/>
    <property type="project" value="EnsemblFungi"/>
</dbReference>
<dbReference type="GO" id="GO:0106310">
    <property type="term" value="F:protein serine kinase activity"/>
    <property type="evidence" value="ECO:0007669"/>
    <property type="project" value="RHEA"/>
</dbReference>
<dbReference type="GO" id="GO:0061762">
    <property type="term" value="P:CAMKK-AMPK signaling cascade"/>
    <property type="evidence" value="ECO:0007669"/>
    <property type="project" value="EnsemblFungi"/>
</dbReference>
<dbReference type="GO" id="GO:0042149">
    <property type="term" value="P:cellular response to glucose starvation"/>
    <property type="evidence" value="ECO:0007669"/>
    <property type="project" value="EnsemblFungi"/>
</dbReference>
<dbReference type="GO" id="GO:0000132">
    <property type="term" value="P:establishment of mitotic spindle orientation"/>
    <property type="evidence" value="ECO:0007669"/>
    <property type="project" value="EnsemblFungi"/>
</dbReference>
<dbReference type="GO" id="GO:0071940">
    <property type="term" value="P:fungal-type cell wall assembly"/>
    <property type="evidence" value="ECO:0007669"/>
    <property type="project" value="EnsemblFungi"/>
</dbReference>
<dbReference type="GO" id="GO:0001403">
    <property type="term" value="P:invasive growth in response to glucose limitation"/>
    <property type="evidence" value="ECO:0007669"/>
    <property type="project" value="EnsemblFungi"/>
</dbReference>
<dbReference type="GO" id="GO:0010920">
    <property type="term" value="P:negative regulation of inositol phosphate biosynthetic process"/>
    <property type="evidence" value="ECO:0007669"/>
    <property type="project" value="EnsemblFungi"/>
</dbReference>
<dbReference type="GO" id="GO:1904262">
    <property type="term" value="P:negative regulation of TORC1 signaling"/>
    <property type="evidence" value="ECO:0007669"/>
    <property type="project" value="EnsemblFungi"/>
</dbReference>
<dbReference type="GO" id="GO:0017148">
    <property type="term" value="P:negative regulation of translation"/>
    <property type="evidence" value="ECO:0007669"/>
    <property type="project" value="EnsemblFungi"/>
</dbReference>
<dbReference type="GO" id="GO:1900436">
    <property type="term" value="P:positive regulation of filamentous growth of a population of unicellular organisms in response to starvation"/>
    <property type="evidence" value="ECO:0007669"/>
    <property type="project" value="EnsemblFungi"/>
</dbReference>
<dbReference type="GO" id="GO:0045722">
    <property type="term" value="P:positive regulation of gluconeogenesis"/>
    <property type="evidence" value="ECO:0007669"/>
    <property type="project" value="EnsemblFungi"/>
</dbReference>
<dbReference type="GO" id="GO:0016239">
    <property type="term" value="P:positive regulation of macroautophagy"/>
    <property type="evidence" value="ECO:0007669"/>
    <property type="project" value="EnsemblFungi"/>
</dbReference>
<dbReference type="GO" id="GO:2000222">
    <property type="term" value="P:positive regulation of pseudohyphal growth"/>
    <property type="evidence" value="ECO:0007669"/>
    <property type="project" value="EnsemblFungi"/>
</dbReference>
<dbReference type="GO" id="GO:0045944">
    <property type="term" value="P:positive regulation of transcription by RNA polymerase II"/>
    <property type="evidence" value="ECO:0007669"/>
    <property type="project" value="EnsemblFungi"/>
</dbReference>
<dbReference type="GO" id="GO:2000217">
    <property type="term" value="P:regulation of invasive growth in response to glucose limitation"/>
    <property type="evidence" value="ECO:0007669"/>
    <property type="project" value="EnsemblFungi"/>
</dbReference>
<dbReference type="GO" id="GO:0034976">
    <property type="term" value="P:response to endoplasmic reticulum stress"/>
    <property type="evidence" value="ECO:0007669"/>
    <property type="project" value="EnsemblFungi"/>
</dbReference>
<dbReference type="GO" id="GO:0006986">
    <property type="term" value="P:response to unfolded protein"/>
    <property type="evidence" value="ECO:0007669"/>
    <property type="project" value="EnsemblFungi"/>
</dbReference>
<dbReference type="GO" id="GO:0090606">
    <property type="term" value="P:single-species surface biofilm formation"/>
    <property type="evidence" value="ECO:0007669"/>
    <property type="project" value="EnsemblFungi"/>
</dbReference>
<dbReference type="GO" id="GO:0032933">
    <property type="term" value="P:SREBP signaling pathway"/>
    <property type="evidence" value="ECO:0007669"/>
    <property type="project" value="EnsemblFungi"/>
</dbReference>
<dbReference type="CDD" id="cd12122">
    <property type="entry name" value="AMPKA_C"/>
    <property type="match status" value="1"/>
</dbReference>
<dbReference type="CDD" id="cd14079">
    <property type="entry name" value="STKc_AMPK_alpha"/>
    <property type="match status" value="1"/>
</dbReference>
<dbReference type="FunFam" id="1.10.510.10:FF:000544">
    <property type="entry name" value="Non-specific serine/threonine protein kinase"/>
    <property type="match status" value="1"/>
</dbReference>
<dbReference type="FunFam" id="3.30.200.20:FF:000236">
    <property type="entry name" value="Non-specific serine/threonine protein kinase"/>
    <property type="match status" value="1"/>
</dbReference>
<dbReference type="Gene3D" id="3.30.310.80">
    <property type="entry name" value="Kinase associated domain 1, KA1"/>
    <property type="match status" value="1"/>
</dbReference>
<dbReference type="Gene3D" id="1.10.510.10">
    <property type="entry name" value="Transferase(Phosphotransferase) domain 1"/>
    <property type="match status" value="1"/>
</dbReference>
<dbReference type="InterPro" id="IPR032270">
    <property type="entry name" value="AMPK_C"/>
</dbReference>
<dbReference type="InterPro" id="IPR028375">
    <property type="entry name" value="KA1/Ssp2_C"/>
</dbReference>
<dbReference type="InterPro" id="IPR011009">
    <property type="entry name" value="Kinase-like_dom_sf"/>
</dbReference>
<dbReference type="InterPro" id="IPR000719">
    <property type="entry name" value="Prot_kinase_dom"/>
</dbReference>
<dbReference type="InterPro" id="IPR017441">
    <property type="entry name" value="Protein_kinase_ATP_BS"/>
</dbReference>
<dbReference type="InterPro" id="IPR008271">
    <property type="entry name" value="Ser/Thr_kinase_AS"/>
</dbReference>
<dbReference type="InterPro" id="IPR013896">
    <property type="entry name" value="SNF1_UBA"/>
</dbReference>
<dbReference type="PANTHER" id="PTHR24346">
    <property type="entry name" value="MAP/MICROTUBULE AFFINITY-REGULATING KINASE"/>
    <property type="match status" value="1"/>
</dbReference>
<dbReference type="PANTHER" id="PTHR24346:SF110">
    <property type="entry name" value="NON-SPECIFIC SERINE_THREONINE PROTEIN KINASE"/>
    <property type="match status" value="1"/>
</dbReference>
<dbReference type="Pfam" id="PF16579">
    <property type="entry name" value="AdenylateSensor"/>
    <property type="match status" value="1"/>
</dbReference>
<dbReference type="Pfam" id="PF00069">
    <property type="entry name" value="Pkinase"/>
    <property type="match status" value="1"/>
</dbReference>
<dbReference type="Pfam" id="PF08587">
    <property type="entry name" value="UBA_2"/>
    <property type="match status" value="1"/>
</dbReference>
<dbReference type="SMART" id="SM00220">
    <property type="entry name" value="S_TKc"/>
    <property type="match status" value="1"/>
</dbReference>
<dbReference type="SUPFAM" id="SSF103243">
    <property type="entry name" value="KA1-like"/>
    <property type="match status" value="1"/>
</dbReference>
<dbReference type="SUPFAM" id="SSF56112">
    <property type="entry name" value="Protein kinase-like (PK-like)"/>
    <property type="match status" value="1"/>
</dbReference>
<dbReference type="PROSITE" id="PS00107">
    <property type="entry name" value="PROTEIN_KINASE_ATP"/>
    <property type="match status" value="1"/>
</dbReference>
<dbReference type="PROSITE" id="PS50011">
    <property type="entry name" value="PROTEIN_KINASE_DOM"/>
    <property type="match status" value="1"/>
</dbReference>
<dbReference type="PROSITE" id="PS00108">
    <property type="entry name" value="PROTEIN_KINASE_ST"/>
    <property type="match status" value="1"/>
</dbReference>
<organism>
    <name type="scientific">Candida albicans</name>
    <name type="common">Yeast</name>
    <dbReference type="NCBI Taxonomy" id="5476"/>
    <lineage>
        <taxon>Eukaryota</taxon>
        <taxon>Fungi</taxon>
        <taxon>Dikarya</taxon>
        <taxon>Ascomycota</taxon>
        <taxon>Saccharomycotina</taxon>
        <taxon>Pichiomycetes</taxon>
        <taxon>Debaryomycetaceae</taxon>
        <taxon>Candida/Lodderomyces clade</taxon>
        <taxon>Candida</taxon>
    </lineage>
</organism>
<name>SNF1_CANAX</name>
<evidence type="ECO:0000250" key="1"/>
<evidence type="ECO:0000255" key="2">
    <source>
        <dbReference type="PROSITE-ProRule" id="PRU00159"/>
    </source>
</evidence>
<evidence type="ECO:0000255" key="3">
    <source>
        <dbReference type="PROSITE-ProRule" id="PRU10027"/>
    </source>
</evidence>
<evidence type="ECO:0000256" key="4">
    <source>
        <dbReference type="SAM" id="MobiDB-lite"/>
    </source>
</evidence>
<evidence type="ECO:0000305" key="5"/>
<protein>
    <recommendedName>
        <fullName>Carbon catabolite-derepressing protein kinase</fullName>
        <ecNumber>2.7.11.1</ecNumber>
    </recommendedName>
</protein>
<comment type="function">
    <text evidence="1">Essential for release from glucose repression. It interacts and has functional relationship to the regulatory protein SNF4. Could phosphorylate CAT8 (By similarity).</text>
</comment>
<comment type="catalytic activity">
    <reaction>
        <text>L-seryl-[protein] + ATP = O-phospho-L-seryl-[protein] + ADP + H(+)</text>
        <dbReference type="Rhea" id="RHEA:17989"/>
        <dbReference type="Rhea" id="RHEA-COMP:9863"/>
        <dbReference type="Rhea" id="RHEA-COMP:11604"/>
        <dbReference type="ChEBI" id="CHEBI:15378"/>
        <dbReference type="ChEBI" id="CHEBI:29999"/>
        <dbReference type="ChEBI" id="CHEBI:30616"/>
        <dbReference type="ChEBI" id="CHEBI:83421"/>
        <dbReference type="ChEBI" id="CHEBI:456216"/>
        <dbReference type="EC" id="2.7.11.1"/>
    </reaction>
</comment>
<comment type="catalytic activity">
    <reaction>
        <text>L-threonyl-[protein] + ATP = O-phospho-L-threonyl-[protein] + ADP + H(+)</text>
        <dbReference type="Rhea" id="RHEA:46608"/>
        <dbReference type="Rhea" id="RHEA-COMP:11060"/>
        <dbReference type="Rhea" id="RHEA-COMP:11605"/>
        <dbReference type="ChEBI" id="CHEBI:15378"/>
        <dbReference type="ChEBI" id="CHEBI:30013"/>
        <dbReference type="ChEBI" id="CHEBI:30616"/>
        <dbReference type="ChEBI" id="CHEBI:61977"/>
        <dbReference type="ChEBI" id="CHEBI:456216"/>
        <dbReference type="EC" id="2.7.11.1"/>
    </reaction>
</comment>
<comment type="subcellular location">
    <subcellularLocation>
        <location evidence="1">Nucleus membrane</location>
        <topology evidence="1">Peripheral membrane protein</topology>
    </subcellularLocation>
</comment>
<comment type="similarity">
    <text evidence="5">Belongs to the protein kinase superfamily. CAMK Ser/Thr protein kinase family. SNF1 subfamily.</text>
</comment>
<reference key="1">
    <citation type="journal article" date="1997" name="Infect. Immun.">
        <title>A gene homologous to Saccharomyces cerevisiae SNF1 appears to be essential for the viability of Candida albicans.</title>
        <authorList>
            <person name="Petter R."/>
            <person name="Chang Y.C."/>
            <person name="Kwon-Chung K.J."/>
        </authorList>
    </citation>
    <scope>NUCLEOTIDE SEQUENCE</scope>
    <source>
        <strain>ATCC 32354 / B-311</strain>
    </source>
</reference>
<reference key="2">
    <citation type="submission" date="1996-03" db="EMBL/GenBank/DDBJ databases">
        <authorList>
            <person name="Petter R."/>
            <person name="Kwon-Chung K.J."/>
        </authorList>
    </citation>
    <scope>NUCLEOTIDE SEQUENCE [MRNA] OF 7-620</scope>
    <source>
        <strain>ATCC 32354 / B-311</strain>
    </source>
</reference>
<keyword id="KW-0067">ATP-binding</keyword>
<keyword id="KW-0119">Carbohydrate metabolism</keyword>
<keyword id="KW-0418">Kinase</keyword>
<keyword id="KW-0472">Membrane</keyword>
<keyword id="KW-0547">Nucleotide-binding</keyword>
<keyword id="KW-0539">Nucleus</keyword>
<keyword id="KW-0597">Phosphoprotein</keyword>
<keyword id="KW-0723">Serine/threonine-protein kinase</keyword>
<keyword id="KW-0808">Transferase</keyword>
<accession>P52497</accession>
<accession>Q00309</accession>
<sequence>MSEQAQPQASADQQQHQHNHHHHHHHHHHNENQSQQQVPIDPAANPANRIGRYQILKTLGEGSFGKVKLAQHLGTGQKVALKIINRKTLAKSDMQGRVEREISYLRLLRHPHIIKLYDVIKSKDEIIMVIEFAGKELFDYIVQRGKMPEDEARRFFQQIIAAVEYCHRHKIVHRDLKPENLLLDDQLNVKIADFGLSNIMTDGNFLKTSCGSPNYMPAPEVISGKLYAGPEVDVWSAGVILYVMLCGRLPFDDEFIPALFKKISNGVYTLPNYLSAGAKHLLTRMLVVNPLNRITIHEIMEDDWFKQDMPDYLLPPDLSKNKNSKIDVDEDVIRALSVTMGYDRDCKIVNVIEKANKQVAAGNSSSQQSKSSNEILDAYLLMKENHALVKDLKKSKSENIESFLSQSPPPSPFPNRGSTSSAPGVQQSLTYQTLATVPDLSTLPNSTIAILPTSLPSIHRAYMAETKQNGDPSQQHAPPPTKKSKTRWHFGIRSRSYPLDVMGEIYRALKNLGAEWAKPTEEELWTIRVRWKYDTSAQFECGSAPNLMKMQIQLFQLEPNNYLVSFKFSGWESAHGNAGTDSPQSHRQQDLDEVGSFSAYPFLHLATRLIMELAVNSQSG</sequence>